<organism>
    <name type="scientific">Vibrio cholerae serotype O1 (strain M66-2)</name>
    <dbReference type="NCBI Taxonomy" id="579112"/>
    <lineage>
        <taxon>Bacteria</taxon>
        <taxon>Pseudomonadati</taxon>
        <taxon>Pseudomonadota</taxon>
        <taxon>Gammaproteobacteria</taxon>
        <taxon>Vibrionales</taxon>
        <taxon>Vibrionaceae</taxon>
        <taxon>Vibrio</taxon>
    </lineage>
</organism>
<gene>
    <name evidence="1" type="primary">metK</name>
    <name type="ordered locus">VCM66_0457</name>
</gene>
<sequence>MAIKHLFTSESVSEGHPDKIADQISDAVLDAIFEQDPKARVACETYVKTGMVMVGGEITTSAWVDIEEITRQTVREIGYVHSDMGFDANSCAVLNTIGKQSPDINQGVDKADPKEQGAGDQGIMFGYATNETEVLMPAPITYAHRLMQRQAEVRKNGTLPWLRPDAKSQVTFQYDQGKIVGIDAVVLSTQHSDSISTADLREAVMEEIIKPVLPAEWLSKETKYFINPTGRFVIGGPMGDCGLTGRKIIVDTYGGAARHGGGAFSGKDPSKVDRSAAYAARYVAKNIVAAGMADRCEIQLSYAIGVADPTSIMVETFGTEKVSQEIIIEAVRQFFDLRPYGLQEMLNLLQPIYKKTAAYGHFGREEFPWEATDKAALLRDFAGLK</sequence>
<accession>C3LRY9</accession>
<protein>
    <recommendedName>
        <fullName evidence="1">S-adenosylmethionine synthase</fullName>
        <shortName evidence="1">AdoMet synthase</shortName>
        <ecNumber evidence="1">2.5.1.6</ecNumber>
    </recommendedName>
    <alternativeName>
        <fullName evidence="1">MAT</fullName>
    </alternativeName>
    <alternativeName>
        <fullName evidence="1">Methionine adenosyltransferase</fullName>
    </alternativeName>
</protein>
<proteinExistence type="inferred from homology"/>
<reference key="1">
    <citation type="journal article" date="2008" name="PLoS ONE">
        <title>A recalibrated molecular clock and independent origins for the cholera pandemic clones.</title>
        <authorList>
            <person name="Feng L."/>
            <person name="Reeves P.R."/>
            <person name="Lan R."/>
            <person name="Ren Y."/>
            <person name="Gao C."/>
            <person name="Zhou Z."/>
            <person name="Ren Y."/>
            <person name="Cheng J."/>
            <person name="Wang W."/>
            <person name="Wang J."/>
            <person name="Qian W."/>
            <person name="Li D."/>
            <person name="Wang L."/>
        </authorList>
    </citation>
    <scope>NUCLEOTIDE SEQUENCE [LARGE SCALE GENOMIC DNA]</scope>
    <source>
        <strain>M66-2</strain>
    </source>
</reference>
<keyword id="KW-0067">ATP-binding</keyword>
<keyword id="KW-0963">Cytoplasm</keyword>
<keyword id="KW-0460">Magnesium</keyword>
<keyword id="KW-0479">Metal-binding</keyword>
<keyword id="KW-0547">Nucleotide-binding</keyword>
<keyword id="KW-0554">One-carbon metabolism</keyword>
<keyword id="KW-0630">Potassium</keyword>
<keyword id="KW-0808">Transferase</keyword>
<evidence type="ECO:0000255" key="1">
    <source>
        <dbReference type="HAMAP-Rule" id="MF_00086"/>
    </source>
</evidence>
<comment type="function">
    <text evidence="1">Catalyzes the formation of S-adenosylmethionine (AdoMet) from methionine and ATP. The overall synthetic reaction is composed of two sequential steps, AdoMet formation and the subsequent tripolyphosphate hydrolysis which occurs prior to release of AdoMet from the enzyme.</text>
</comment>
<comment type="catalytic activity">
    <reaction evidence="1">
        <text>L-methionine + ATP + H2O = S-adenosyl-L-methionine + phosphate + diphosphate</text>
        <dbReference type="Rhea" id="RHEA:21080"/>
        <dbReference type="ChEBI" id="CHEBI:15377"/>
        <dbReference type="ChEBI" id="CHEBI:30616"/>
        <dbReference type="ChEBI" id="CHEBI:33019"/>
        <dbReference type="ChEBI" id="CHEBI:43474"/>
        <dbReference type="ChEBI" id="CHEBI:57844"/>
        <dbReference type="ChEBI" id="CHEBI:59789"/>
        <dbReference type="EC" id="2.5.1.6"/>
    </reaction>
</comment>
<comment type="cofactor">
    <cofactor evidence="1">
        <name>Mg(2+)</name>
        <dbReference type="ChEBI" id="CHEBI:18420"/>
    </cofactor>
    <text evidence="1">Binds 2 divalent ions per subunit.</text>
</comment>
<comment type="cofactor">
    <cofactor evidence="1">
        <name>K(+)</name>
        <dbReference type="ChEBI" id="CHEBI:29103"/>
    </cofactor>
    <text evidence="1">Binds 1 potassium ion per subunit.</text>
</comment>
<comment type="pathway">
    <text evidence="1">Amino-acid biosynthesis; S-adenosyl-L-methionine biosynthesis; S-adenosyl-L-methionine from L-methionine: step 1/1.</text>
</comment>
<comment type="subunit">
    <text evidence="1">Homotetramer; dimer of dimers.</text>
</comment>
<comment type="subcellular location">
    <subcellularLocation>
        <location evidence="1">Cytoplasm</location>
    </subcellularLocation>
</comment>
<comment type="similarity">
    <text evidence="1">Belongs to the AdoMet synthase family.</text>
</comment>
<name>METK_VIBCM</name>
<feature type="chain" id="PRO_1000196736" description="S-adenosylmethionine synthase">
    <location>
        <begin position="1"/>
        <end position="385"/>
    </location>
</feature>
<feature type="region of interest" description="Flexible loop" evidence="1">
    <location>
        <begin position="100"/>
        <end position="110"/>
    </location>
</feature>
<feature type="binding site" description="in other chain" evidence="1">
    <location>
        <position position="16"/>
    </location>
    <ligand>
        <name>ATP</name>
        <dbReference type="ChEBI" id="CHEBI:30616"/>
        <note>ligand shared between two neighboring subunits</note>
    </ligand>
</feature>
<feature type="binding site" evidence="1">
    <location>
        <position position="18"/>
    </location>
    <ligand>
        <name>Mg(2+)</name>
        <dbReference type="ChEBI" id="CHEBI:18420"/>
    </ligand>
</feature>
<feature type="binding site" evidence="1">
    <location>
        <position position="44"/>
    </location>
    <ligand>
        <name>K(+)</name>
        <dbReference type="ChEBI" id="CHEBI:29103"/>
    </ligand>
</feature>
<feature type="binding site" description="in other chain" evidence="1">
    <location>
        <position position="57"/>
    </location>
    <ligand>
        <name>L-methionine</name>
        <dbReference type="ChEBI" id="CHEBI:57844"/>
        <note>ligand shared between two neighboring subunits</note>
    </ligand>
</feature>
<feature type="binding site" description="in other chain" evidence="1">
    <location>
        <position position="100"/>
    </location>
    <ligand>
        <name>L-methionine</name>
        <dbReference type="ChEBI" id="CHEBI:57844"/>
        <note>ligand shared between two neighboring subunits</note>
    </ligand>
</feature>
<feature type="binding site" description="in other chain" evidence="1">
    <location>
        <begin position="165"/>
        <end position="167"/>
    </location>
    <ligand>
        <name>ATP</name>
        <dbReference type="ChEBI" id="CHEBI:30616"/>
        <note>ligand shared between two neighboring subunits</note>
    </ligand>
</feature>
<feature type="binding site" description="in other chain" evidence="1">
    <location>
        <begin position="231"/>
        <end position="232"/>
    </location>
    <ligand>
        <name>ATP</name>
        <dbReference type="ChEBI" id="CHEBI:30616"/>
        <note>ligand shared between two neighboring subunits</note>
    </ligand>
</feature>
<feature type="binding site" evidence="1">
    <location>
        <position position="240"/>
    </location>
    <ligand>
        <name>ATP</name>
        <dbReference type="ChEBI" id="CHEBI:30616"/>
        <note>ligand shared between two neighboring subunits</note>
    </ligand>
</feature>
<feature type="binding site" evidence="1">
    <location>
        <position position="240"/>
    </location>
    <ligand>
        <name>L-methionine</name>
        <dbReference type="ChEBI" id="CHEBI:57844"/>
        <note>ligand shared between two neighboring subunits</note>
    </ligand>
</feature>
<feature type="binding site" description="in other chain" evidence="1">
    <location>
        <begin position="246"/>
        <end position="247"/>
    </location>
    <ligand>
        <name>ATP</name>
        <dbReference type="ChEBI" id="CHEBI:30616"/>
        <note>ligand shared between two neighboring subunits</note>
    </ligand>
</feature>
<feature type="binding site" evidence="1">
    <location>
        <position position="263"/>
    </location>
    <ligand>
        <name>ATP</name>
        <dbReference type="ChEBI" id="CHEBI:30616"/>
        <note>ligand shared between two neighboring subunits</note>
    </ligand>
</feature>
<feature type="binding site" evidence="1">
    <location>
        <position position="267"/>
    </location>
    <ligand>
        <name>ATP</name>
        <dbReference type="ChEBI" id="CHEBI:30616"/>
        <note>ligand shared between two neighboring subunits</note>
    </ligand>
</feature>
<feature type="binding site" description="in other chain" evidence="1">
    <location>
        <position position="271"/>
    </location>
    <ligand>
        <name>L-methionine</name>
        <dbReference type="ChEBI" id="CHEBI:57844"/>
        <note>ligand shared between two neighboring subunits</note>
    </ligand>
</feature>
<dbReference type="EC" id="2.5.1.6" evidence="1"/>
<dbReference type="EMBL" id="CP001233">
    <property type="protein sequence ID" value="ACP04782.1"/>
    <property type="molecule type" value="Genomic_DNA"/>
</dbReference>
<dbReference type="RefSeq" id="WP_000985183.1">
    <property type="nucleotide sequence ID" value="NC_012578.1"/>
</dbReference>
<dbReference type="SMR" id="C3LRY9"/>
<dbReference type="GeneID" id="89515371"/>
<dbReference type="KEGG" id="vcm:VCM66_0457"/>
<dbReference type="HOGENOM" id="CLU_041802_1_1_6"/>
<dbReference type="UniPathway" id="UPA00315">
    <property type="reaction ID" value="UER00080"/>
</dbReference>
<dbReference type="Proteomes" id="UP000001217">
    <property type="component" value="Chromosome I"/>
</dbReference>
<dbReference type="GO" id="GO:0005737">
    <property type="term" value="C:cytoplasm"/>
    <property type="evidence" value="ECO:0007669"/>
    <property type="project" value="UniProtKB-SubCell"/>
</dbReference>
<dbReference type="GO" id="GO:0005524">
    <property type="term" value="F:ATP binding"/>
    <property type="evidence" value="ECO:0007669"/>
    <property type="project" value="UniProtKB-UniRule"/>
</dbReference>
<dbReference type="GO" id="GO:0000287">
    <property type="term" value="F:magnesium ion binding"/>
    <property type="evidence" value="ECO:0007669"/>
    <property type="project" value="UniProtKB-UniRule"/>
</dbReference>
<dbReference type="GO" id="GO:0004478">
    <property type="term" value="F:methionine adenosyltransferase activity"/>
    <property type="evidence" value="ECO:0007669"/>
    <property type="project" value="UniProtKB-UniRule"/>
</dbReference>
<dbReference type="GO" id="GO:0006730">
    <property type="term" value="P:one-carbon metabolic process"/>
    <property type="evidence" value="ECO:0007669"/>
    <property type="project" value="UniProtKB-KW"/>
</dbReference>
<dbReference type="GO" id="GO:0006556">
    <property type="term" value="P:S-adenosylmethionine biosynthetic process"/>
    <property type="evidence" value="ECO:0007669"/>
    <property type="project" value="UniProtKB-UniRule"/>
</dbReference>
<dbReference type="CDD" id="cd18079">
    <property type="entry name" value="S-AdoMet_synt"/>
    <property type="match status" value="1"/>
</dbReference>
<dbReference type="FunFam" id="3.30.300.10:FF:000001">
    <property type="entry name" value="S-adenosylmethionine synthase"/>
    <property type="match status" value="1"/>
</dbReference>
<dbReference type="FunFam" id="3.30.300.10:FF:000003">
    <property type="entry name" value="S-adenosylmethionine synthase"/>
    <property type="match status" value="1"/>
</dbReference>
<dbReference type="Gene3D" id="3.30.300.10">
    <property type="match status" value="3"/>
</dbReference>
<dbReference type="HAMAP" id="MF_00086">
    <property type="entry name" value="S_AdoMet_synth1"/>
    <property type="match status" value="1"/>
</dbReference>
<dbReference type="InterPro" id="IPR022631">
    <property type="entry name" value="ADOMET_SYNTHASE_CS"/>
</dbReference>
<dbReference type="InterPro" id="IPR022630">
    <property type="entry name" value="S-AdoMet_synt_C"/>
</dbReference>
<dbReference type="InterPro" id="IPR022629">
    <property type="entry name" value="S-AdoMet_synt_central"/>
</dbReference>
<dbReference type="InterPro" id="IPR022628">
    <property type="entry name" value="S-AdoMet_synt_N"/>
</dbReference>
<dbReference type="InterPro" id="IPR002133">
    <property type="entry name" value="S-AdoMet_synthetase"/>
</dbReference>
<dbReference type="InterPro" id="IPR022636">
    <property type="entry name" value="S-AdoMet_synthetase_sfam"/>
</dbReference>
<dbReference type="NCBIfam" id="TIGR01034">
    <property type="entry name" value="metK"/>
    <property type="match status" value="1"/>
</dbReference>
<dbReference type="PANTHER" id="PTHR11964">
    <property type="entry name" value="S-ADENOSYLMETHIONINE SYNTHETASE"/>
    <property type="match status" value="1"/>
</dbReference>
<dbReference type="Pfam" id="PF02773">
    <property type="entry name" value="S-AdoMet_synt_C"/>
    <property type="match status" value="1"/>
</dbReference>
<dbReference type="Pfam" id="PF02772">
    <property type="entry name" value="S-AdoMet_synt_M"/>
    <property type="match status" value="1"/>
</dbReference>
<dbReference type="Pfam" id="PF00438">
    <property type="entry name" value="S-AdoMet_synt_N"/>
    <property type="match status" value="1"/>
</dbReference>
<dbReference type="PIRSF" id="PIRSF000497">
    <property type="entry name" value="MAT"/>
    <property type="match status" value="1"/>
</dbReference>
<dbReference type="SUPFAM" id="SSF55973">
    <property type="entry name" value="S-adenosylmethionine synthetase"/>
    <property type="match status" value="3"/>
</dbReference>
<dbReference type="PROSITE" id="PS00376">
    <property type="entry name" value="ADOMET_SYNTHASE_1"/>
    <property type="match status" value="1"/>
</dbReference>
<dbReference type="PROSITE" id="PS00377">
    <property type="entry name" value="ADOMET_SYNTHASE_2"/>
    <property type="match status" value="1"/>
</dbReference>